<organism>
    <name type="scientific">Staphylococcus aureus (strain USA300)</name>
    <dbReference type="NCBI Taxonomy" id="367830"/>
    <lineage>
        <taxon>Bacteria</taxon>
        <taxon>Bacillati</taxon>
        <taxon>Bacillota</taxon>
        <taxon>Bacilli</taxon>
        <taxon>Bacillales</taxon>
        <taxon>Staphylococcaceae</taxon>
        <taxon>Staphylococcus</taxon>
    </lineage>
</organism>
<proteinExistence type="inferred from homology"/>
<protein>
    <recommendedName>
        <fullName evidence="2">D-alanine--D-alanine ligase</fullName>
        <ecNumber evidence="2">6.3.2.4</ecNumber>
    </recommendedName>
    <alternativeName>
        <fullName evidence="2">D-Ala-D-Ala ligase</fullName>
    </alternativeName>
    <alternativeName>
        <fullName evidence="2">D-alanylalanine synthetase</fullName>
    </alternativeName>
</protein>
<sequence length="356" mass="40231">MTKENICIVFGGKSAEHEVSILTAQNVLNAIDKDKYHVDIIYITNDGDWRKQNNITAEIKSTDELHLENGEALEISQLLKESSSGQPYDAVFPLLHGPNGEDGTIQGLFEVLDVPYVGNGVLSAASSMDKLVMKQLFEHRGLPQLPYISFLRSEYEKYEHNILKLVNDKLNYPVFVKPANLGSSVGISKCNNEAELKEGIKEAFQFDRKLVIEQGVNAREIEVAVLGNDYPEATWPGEVVKDVAFYDYKSKYKDGKVQLQIPADLDEDVQLTLRNMALEAFKATDCSGLVRADFFVTEDNQIYINETNAMPGFTAFSMYPKLWENMGLSYPELITKLIELAKERHQDKQKNKYKID</sequence>
<feature type="chain" id="PRO_1000030493" description="D-alanine--D-alanine ligase">
    <location>
        <begin position="1"/>
        <end position="356"/>
    </location>
</feature>
<feature type="domain" description="ATP-grasp" evidence="2">
    <location>
        <begin position="134"/>
        <end position="339"/>
    </location>
</feature>
<feature type="binding site" evidence="2">
    <location>
        <begin position="167"/>
        <end position="222"/>
    </location>
    <ligand>
        <name>ATP</name>
        <dbReference type="ChEBI" id="CHEBI:30616"/>
    </ligand>
</feature>
<feature type="binding site" evidence="2">
    <location>
        <position position="293"/>
    </location>
    <ligand>
        <name>Mg(2+)</name>
        <dbReference type="ChEBI" id="CHEBI:18420"/>
        <label>1</label>
    </ligand>
</feature>
<feature type="binding site" evidence="2">
    <location>
        <position position="306"/>
    </location>
    <ligand>
        <name>Mg(2+)</name>
        <dbReference type="ChEBI" id="CHEBI:18420"/>
        <label>1</label>
    </ligand>
</feature>
<feature type="binding site" evidence="2">
    <location>
        <position position="306"/>
    </location>
    <ligand>
        <name>Mg(2+)</name>
        <dbReference type="ChEBI" id="CHEBI:18420"/>
        <label>2</label>
    </ligand>
</feature>
<feature type="binding site" evidence="2">
    <location>
        <position position="308"/>
    </location>
    <ligand>
        <name>Mg(2+)</name>
        <dbReference type="ChEBI" id="CHEBI:18420"/>
        <label>2</label>
    </ligand>
</feature>
<comment type="function">
    <text evidence="2">Cell wall formation.</text>
</comment>
<comment type="catalytic activity">
    <reaction evidence="2">
        <text>2 D-alanine + ATP = D-alanyl-D-alanine + ADP + phosphate + H(+)</text>
        <dbReference type="Rhea" id="RHEA:11224"/>
        <dbReference type="ChEBI" id="CHEBI:15378"/>
        <dbReference type="ChEBI" id="CHEBI:30616"/>
        <dbReference type="ChEBI" id="CHEBI:43474"/>
        <dbReference type="ChEBI" id="CHEBI:57416"/>
        <dbReference type="ChEBI" id="CHEBI:57822"/>
        <dbReference type="ChEBI" id="CHEBI:456216"/>
        <dbReference type="EC" id="6.3.2.4"/>
    </reaction>
</comment>
<comment type="cofactor">
    <cofactor evidence="1">
        <name>Mg(2+)</name>
        <dbReference type="ChEBI" id="CHEBI:18420"/>
    </cofactor>
    <cofactor evidence="1">
        <name>Mn(2+)</name>
        <dbReference type="ChEBI" id="CHEBI:29035"/>
    </cofactor>
    <text evidence="1">Binds 2 magnesium or manganese ions per subunit.</text>
</comment>
<comment type="pathway">
    <text evidence="2">Cell wall biogenesis; peptidoglycan biosynthesis.</text>
</comment>
<comment type="subcellular location">
    <subcellularLocation>
        <location evidence="2">Cytoplasm</location>
    </subcellularLocation>
</comment>
<comment type="similarity">
    <text evidence="2">Belongs to the D-alanine--D-alanine ligase family.</text>
</comment>
<keyword id="KW-0067">ATP-binding</keyword>
<keyword id="KW-0133">Cell shape</keyword>
<keyword id="KW-0961">Cell wall biogenesis/degradation</keyword>
<keyword id="KW-0963">Cytoplasm</keyword>
<keyword id="KW-0436">Ligase</keyword>
<keyword id="KW-0460">Magnesium</keyword>
<keyword id="KW-0464">Manganese</keyword>
<keyword id="KW-0479">Metal-binding</keyword>
<keyword id="KW-0547">Nucleotide-binding</keyword>
<keyword id="KW-0573">Peptidoglycan synthesis</keyword>
<evidence type="ECO:0000250" key="1"/>
<evidence type="ECO:0000255" key="2">
    <source>
        <dbReference type="HAMAP-Rule" id="MF_00047"/>
    </source>
</evidence>
<accession>Q2FF43</accession>
<name>DDL_STAA3</name>
<gene>
    <name evidence="2" type="primary">ddl</name>
    <name type="ordered locus">SAUSA300_2039</name>
</gene>
<reference key="1">
    <citation type="journal article" date="2006" name="Lancet">
        <title>Complete genome sequence of USA300, an epidemic clone of community-acquired meticillin-resistant Staphylococcus aureus.</title>
        <authorList>
            <person name="Diep B.A."/>
            <person name="Gill S.R."/>
            <person name="Chang R.F."/>
            <person name="Phan T.H."/>
            <person name="Chen J.H."/>
            <person name="Davidson M.G."/>
            <person name="Lin F."/>
            <person name="Lin J."/>
            <person name="Carleton H.A."/>
            <person name="Mongodin E.F."/>
            <person name="Sensabaugh G.F."/>
            <person name="Perdreau-Remington F."/>
        </authorList>
    </citation>
    <scope>NUCLEOTIDE SEQUENCE [LARGE SCALE GENOMIC DNA]</scope>
    <source>
        <strain>USA300</strain>
    </source>
</reference>
<dbReference type="EC" id="6.3.2.4" evidence="2"/>
<dbReference type="EMBL" id="CP000255">
    <property type="protein sequence ID" value="ABD20463.1"/>
    <property type="molecule type" value="Genomic_DNA"/>
</dbReference>
<dbReference type="RefSeq" id="WP_000159631.1">
    <property type="nucleotide sequence ID" value="NZ_CP027476.1"/>
</dbReference>
<dbReference type="SMR" id="Q2FF43"/>
<dbReference type="KEGG" id="saa:SAUSA300_2039"/>
<dbReference type="HOGENOM" id="CLU_039268_0_0_9"/>
<dbReference type="OMA" id="TQYRIPC"/>
<dbReference type="UniPathway" id="UPA00219"/>
<dbReference type="Proteomes" id="UP000001939">
    <property type="component" value="Chromosome"/>
</dbReference>
<dbReference type="GO" id="GO:0005829">
    <property type="term" value="C:cytosol"/>
    <property type="evidence" value="ECO:0007669"/>
    <property type="project" value="TreeGrafter"/>
</dbReference>
<dbReference type="GO" id="GO:0005524">
    <property type="term" value="F:ATP binding"/>
    <property type="evidence" value="ECO:0007669"/>
    <property type="project" value="UniProtKB-KW"/>
</dbReference>
<dbReference type="GO" id="GO:0008716">
    <property type="term" value="F:D-alanine-D-alanine ligase activity"/>
    <property type="evidence" value="ECO:0007669"/>
    <property type="project" value="UniProtKB-UniRule"/>
</dbReference>
<dbReference type="GO" id="GO:0046872">
    <property type="term" value="F:metal ion binding"/>
    <property type="evidence" value="ECO:0007669"/>
    <property type="project" value="UniProtKB-KW"/>
</dbReference>
<dbReference type="GO" id="GO:0071555">
    <property type="term" value="P:cell wall organization"/>
    <property type="evidence" value="ECO:0007669"/>
    <property type="project" value="UniProtKB-KW"/>
</dbReference>
<dbReference type="GO" id="GO:0009252">
    <property type="term" value="P:peptidoglycan biosynthetic process"/>
    <property type="evidence" value="ECO:0007669"/>
    <property type="project" value="UniProtKB-UniRule"/>
</dbReference>
<dbReference type="GO" id="GO:0008360">
    <property type="term" value="P:regulation of cell shape"/>
    <property type="evidence" value="ECO:0007669"/>
    <property type="project" value="UniProtKB-KW"/>
</dbReference>
<dbReference type="FunFam" id="3.30.1490.20:FF:000007">
    <property type="entry name" value="D-alanine--D-alanine ligase"/>
    <property type="match status" value="1"/>
</dbReference>
<dbReference type="FunFam" id="3.30.470.20:FF:000008">
    <property type="entry name" value="D-alanine--D-alanine ligase"/>
    <property type="match status" value="1"/>
</dbReference>
<dbReference type="FunFam" id="3.40.50.20:FF:000020">
    <property type="entry name" value="D-alanine--D-alanine ligase"/>
    <property type="match status" value="1"/>
</dbReference>
<dbReference type="Gene3D" id="3.40.50.20">
    <property type="match status" value="1"/>
</dbReference>
<dbReference type="Gene3D" id="3.30.1490.20">
    <property type="entry name" value="ATP-grasp fold, A domain"/>
    <property type="match status" value="1"/>
</dbReference>
<dbReference type="Gene3D" id="3.30.470.20">
    <property type="entry name" value="ATP-grasp fold, B domain"/>
    <property type="match status" value="1"/>
</dbReference>
<dbReference type="HAMAP" id="MF_00047">
    <property type="entry name" value="Dala_Dala_lig"/>
    <property type="match status" value="1"/>
</dbReference>
<dbReference type="InterPro" id="IPR011761">
    <property type="entry name" value="ATP-grasp"/>
</dbReference>
<dbReference type="InterPro" id="IPR013815">
    <property type="entry name" value="ATP_grasp_subdomain_1"/>
</dbReference>
<dbReference type="InterPro" id="IPR000291">
    <property type="entry name" value="D-Ala_lig_Van_CS"/>
</dbReference>
<dbReference type="InterPro" id="IPR005905">
    <property type="entry name" value="D_ala_D_ala"/>
</dbReference>
<dbReference type="InterPro" id="IPR011095">
    <property type="entry name" value="Dala_Dala_lig_C"/>
</dbReference>
<dbReference type="InterPro" id="IPR011127">
    <property type="entry name" value="Dala_Dala_lig_N"/>
</dbReference>
<dbReference type="InterPro" id="IPR016185">
    <property type="entry name" value="PreATP-grasp_dom_sf"/>
</dbReference>
<dbReference type="NCBIfam" id="TIGR01205">
    <property type="entry name" value="D_ala_D_alaTIGR"/>
    <property type="match status" value="1"/>
</dbReference>
<dbReference type="NCBIfam" id="NF002526">
    <property type="entry name" value="PRK01966.1-2"/>
    <property type="match status" value="1"/>
</dbReference>
<dbReference type="NCBIfam" id="NF002528">
    <property type="entry name" value="PRK01966.1-4"/>
    <property type="match status" value="1"/>
</dbReference>
<dbReference type="PANTHER" id="PTHR23132">
    <property type="entry name" value="D-ALANINE--D-ALANINE LIGASE"/>
    <property type="match status" value="1"/>
</dbReference>
<dbReference type="PANTHER" id="PTHR23132:SF25">
    <property type="entry name" value="D-ALANINE--D-ALANINE LIGASE A"/>
    <property type="match status" value="1"/>
</dbReference>
<dbReference type="Pfam" id="PF07478">
    <property type="entry name" value="Dala_Dala_lig_C"/>
    <property type="match status" value="1"/>
</dbReference>
<dbReference type="Pfam" id="PF01820">
    <property type="entry name" value="Dala_Dala_lig_N"/>
    <property type="match status" value="1"/>
</dbReference>
<dbReference type="PIRSF" id="PIRSF039102">
    <property type="entry name" value="Ddl/VanB"/>
    <property type="match status" value="1"/>
</dbReference>
<dbReference type="SUPFAM" id="SSF56059">
    <property type="entry name" value="Glutathione synthetase ATP-binding domain-like"/>
    <property type="match status" value="1"/>
</dbReference>
<dbReference type="SUPFAM" id="SSF52440">
    <property type="entry name" value="PreATP-grasp domain"/>
    <property type="match status" value="1"/>
</dbReference>
<dbReference type="PROSITE" id="PS50975">
    <property type="entry name" value="ATP_GRASP"/>
    <property type="match status" value="1"/>
</dbReference>
<dbReference type="PROSITE" id="PS00843">
    <property type="entry name" value="DALA_DALA_LIGASE_1"/>
    <property type="match status" value="1"/>
</dbReference>
<dbReference type="PROSITE" id="PS00844">
    <property type="entry name" value="DALA_DALA_LIGASE_2"/>
    <property type="match status" value="1"/>
</dbReference>